<reference key="1">
    <citation type="journal article" date="2008" name="J. Bacteriol.">
        <title>Genome sequence of Staphylococcus aureus strain Newman and comparative analysis of staphylococcal genomes: polymorphism and evolution of two major pathogenicity islands.</title>
        <authorList>
            <person name="Baba T."/>
            <person name="Bae T."/>
            <person name="Schneewind O."/>
            <person name="Takeuchi F."/>
            <person name="Hiramatsu K."/>
        </authorList>
    </citation>
    <scope>NUCLEOTIDE SEQUENCE [LARGE SCALE GENOMIC DNA]</scope>
    <source>
        <strain>Newman</strain>
    </source>
</reference>
<dbReference type="EMBL" id="AP009351">
    <property type="protein sequence ID" value="BAF67783.1"/>
    <property type="molecule type" value="Genomic_DNA"/>
</dbReference>
<dbReference type="RefSeq" id="WP_000431312.1">
    <property type="nucleotide sequence ID" value="NZ_JBBIAE010000001.1"/>
</dbReference>
<dbReference type="SMR" id="A6QHF1"/>
<dbReference type="KEGG" id="sae:NWMN_1511"/>
<dbReference type="HOGENOM" id="CLU_101379_2_1_9"/>
<dbReference type="Proteomes" id="UP000006386">
    <property type="component" value="Chromosome"/>
</dbReference>
<dbReference type="GO" id="GO:0003677">
    <property type="term" value="F:DNA binding"/>
    <property type="evidence" value="ECO:0007669"/>
    <property type="project" value="UniProtKB-UniRule"/>
</dbReference>
<dbReference type="GO" id="GO:0070063">
    <property type="term" value="F:RNA polymerase binding"/>
    <property type="evidence" value="ECO:0007669"/>
    <property type="project" value="InterPro"/>
</dbReference>
<dbReference type="GO" id="GO:0006354">
    <property type="term" value="P:DNA-templated transcription elongation"/>
    <property type="evidence" value="ECO:0007669"/>
    <property type="project" value="TreeGrafter"/>
</dbReference>
<dbReference type="GO" id="GO:0032784">
    <property type="term" value="P:regulation of DNA-templated transcription elongation"/>
    <property type="evidence" value="ECO:0007669"/>
    <property type="project" value="UniProtKB-UniRule"/>
</dbReference>
<dbReference type="FunFam" id="1.10.287.180:FF:000001">
    <property type="entry name" value="Transcription elongation factor GreA"/>
    <property type="match status" value="1"/>
</dbReference>
<dbReference type="FunFam" id="3.10.50.30:FF:000001">
    <property type="entry name" value="Transcription elongation factor GreA"/>
    <property type="match status" value="1"/>
</dbReference>
<dbReference type="Gene3D" id="3.10.50.30">
    <property type="entry name" value="Transcription elongation factor, GreA/GreB, C-terminal domain"/>
    <property type="match status" value="1"/>
</dbReference>
<dbReference type="Gene3D" id="1.10.287.180">
    <property type="entry name" value="Transcription elongation factor, GreA/GreB, N-terminal domain"/>
    <property type="match status" value="1"/>
</dbReference>
<dbReference type="HAMAP" id="MF_00105">
    <property type="entry name" value="GreA_GreB"/>
    <property type="match status" value="1"/>
</dbReference>
<dbReference type="InterPro" id="IPR036953">
    <property type="entry name" value="GreA/GreB_C_sf"/>
</dbReference>
<dbReference type="InterPro" id="IPR018151">
    <property type="entry name" value="TF_GreA/GreB_CS"/>
</dbReference>
<dbReference type="InterPro" id="IPR006359">
    <property type="entry name" value="Tscrpt_elong_fac_GreA"/>
</dbReference>
<dbReference type="InterPro" id="IPR028624">
    <property type="entry name" value="Tscrpt_elong_fac_GreA/B"/>
</dbReference>
<dbReference type="InterPro" id="IPR001437">
    <property type="entry name" value="Tscrpt_elong_fac_GreA/B_C"/>
</dbReference>
<dbReference type="InterPro" id="IPR023459">
    <property type="entry name" value="Tscrpt_elong_fac_GreA/B_fam"/>
</dbReference>
<dbReference type="InterPro" id="IPR022691">
    <property type="entry name" value="Tscrpt_elong_fac_GreA/B_N"/>
</dbReference>
<dbReference type="InterPro" id="IPR036805">
    <property type="entry name" value="Tscrpt_elong_fac_GreA/B_N_sf"/>
</dbReference>
<dbReference type="NCBIfam" id="TIGR01462">
    <property type="entry name" value="greA"/>
    <property type="match status" value="1"/>
</dbReference>
<dbReference type="NCBIfam" id="NF001261">
    <property type="entry name" value="PRK00226.1-2"/>
    <property type="match status" value="1"/>
</dbReference>
<dbReference type="NCBIfam" id="NF001263">
    <property type="entry name" value="PRK00226.1-4"/>
    <property type="match status" value="1"/>
</dbReference>
<dbReference type="PANTHER" id="PTHR30437">
    <property type="entry name" value="TRANSCRIPTION ELONGATION FACTOR GREA"/>
    <property type="match status" value="1"/>
</dbReference>
<dbReference type="PANTHER" id="PTHR30437:SF4">
    <property type="entry name" value="TRANSCRIPTION ELONGATION FACTOR GREA"/>
    <property type="match status" value="1"/>
</dbReference>
<dbReference type="Pfam" id="PF01272">
    <property type="entry name" value="GreA_GreB"/>
    <property type="match status" value="1"/>
</dbReference>
<dbReference type="Pfam" id="PF03449">
    <property type="entry name" value="GreA_GreB_N"/>
    <property type="match status" value="1"/>
</dbReference>
<dbReference type="PIRSF" id="PIRSF006092">
    <property type="entry name" value="GreA_GreB"/>
    <property type="match status" value="1"/>
</dbReference>
<dbReference type="SUPFAM" id="SSF54534">
    <property type="entry name" value="FKBP-like"/>
    <property type="match status" value="1"/>
</dbReference>
<dbReference type="SUPFAM" id="SSF46557">
    <property type="entry name" value="GreA transcript cleavage protein, N-terminal domain"/>
    <property type="match status" value="1"/>
</dbReference>
<dbReference type="PROSITE" id="PS00829">
    <property type="entry name" value="GREAB_1"/>
    <property type="match status" value="1"/>
</dbReference>
<dbReference type="PROSITE" id="PS00830">
    <property type="entry name" value="GREAB_2"/>
    <property type="match status" value="1"/>
</dbReference>
<accession>A6QHF1</accession>
<name>GREA_STAAE</name>
<proteinExistence type="inferred from homology"/>
<comment type="function">
    <text evidence="1">Necessary for efficient RNA polymerase transcription elongation past template-encoded arresting sites. The arresting sites in DNA have the property of trapping a certain fraction of elongating RNA polymerases that pass through, resulting in locked ternary complexes. Cleavage of the nascent transcript by cleavage factors such as GreA or GreB allows the resumption of elongation from the new 3'terminus. GreA releases sequences of 2 to 3 nucleotides.</text>
</comment>
<comment type="similarity">
    <text evidence="1">Belongs to the GreA/GreB family.</text>
</comment>
<protein>
    <recommendedName>
        <fullName evidence="1">Transcription elongation factor GreA</fullName>
    </recommendedName>
    <alternativeName>
        <fullName evidence="1">Transcript cleavage factor GreA</fullName>
    </alternativeName>
</protein>
<sequence length="158" mass="17743">MENQKQYPMTQEGFEKLERELEELKTVKRPEVVEKIKVARSFGDLSENSEYDAAKDEQGFIEQDIQRIEHMLRNALIIEDTGDNNVVKIGKTVTFVELPGDEEESYQIVGSAESDAFNGKISNESPMAKALIGKGLDDEVRVPLPNGGEMNVKIVNIQ</sequence>
<organism>
    <name type="scientific">Staphylococcus aureus (strain Newman)</name>
    <dbReference type="NCBI Taxonomy" id="426430"/>
    <lineage>
        <taxon>Bacteria</taxon>
        <taxon>Bacillati</taxon>
        <taxon>Bacillota</taxon>
        <taxon>Bacilli</taxon>
        <taxon>Bacillales</taxon>
        <taxon>Staphylococcaceae</taxon>
        <taxon>Staphylococcus</taxon>
    </lineage>
</organism>
<feature type="chain" id="PRO_1000071313" description="Transcription elongation factor GreA">
    <location>
        <begin position="1"/>
        <end position="158"/>
    </location>
</feature>
<feature type="coiled-coil region" evidence="1">
    <location>
        <begin position="4"/>
        <end position="70"/>
    </location>
</feature>
<evidence type="ECO:0000255" key="1">
    <source>
        <dbReference type="HAMAP-Rule" id="MF_00105"/>
    </source>
</evidence>
<gene>
    <name evidence="1" type="primary">greA</name>
    <name type="ordered locus">NWMN_1511</name>
</gene>
<keyword id="KW-0175">Coiled coil</keyword>
<keyword id="KW-0238">DNA-binding</keyword>
<keyword id="KW-0804">Transcription</keyword>
<keyword id="KW-0805">Transcription regulation</keyword>